<sequence>MKITYCDALIIGGGLAGLRASIACKQKGLNTIVLSLVPVRRSHSAAAQGGMQASLANAKKSEGDNEDLHFLDTVKGSDWGCDQQVARMFVTTAPKAIRELASWGVPWTRIKKGDRPAVVNGEHVIITERDDRHGYILSRDFGGTKKWRTCFTADATGHTMLYAVANEALHHKVDIQDRKDMLAFIHHDNKCYGAVVRDLITGEISAYVSKGTLLATGGYGRVYKHTTNAVICDGAGAASALETGVAKLGNMEAVQFHPTALVPSGILMTEGCRGDGGVLRDKFGRRFMPAYEPEKKELASRDVVSRRILEHIQKGYGAKSPYGDHVWLDIAILGRNHVEKNLRDVRDIAMTFAGIDPADSEEQTKDNMQGAPTNEPEYGQAMAKQKGWIPIKPMQHYSMGGVRTNPKGETHLKGLFCAGEAACWDLHGFNRLGGNSVSEPVVAGMIIGDYFASHCLEAQIEINTQKVEAFIKESQDYMHFLLHNEGKEDVYEIRERMKEVMDEKVGVFREGKKLEEALKELQELYARSKNICVKNKVLHNNPELEDAYRTKKMLKLALCITQGALLRTESRGAHTRIDYPKRDDEKWLNRTLASWPSAEQDMPTIEYEELDVMKMEISPDFRGYGKKGNFIPHPKKEERDAEILKTILELEKLGKDRIEVQHALMPFELQEKYKARNMRLEDEEVRARGEHLYSFNVHDLLDQHNANLKGEHHE</sequence>
<reference key="1">
    <citation type="journal article" date="1999" name="Nature">
        <title>Genomic sequence comparison of two unrelated isolates of the human gastric pathogen Helicobacter pylori.</title>
        <authorList>
            <person name="Alm R.A."/>
            <person name="Ling L.-S.L."/>
            <person name="Moir D.T."/>
            <person name="King B.L."/>
            <person name="Brown E.D."/>
            <person name="Doig P.C."/>
            <person name="Smith D.R."/>
            <person name="Noonan B."/>
            <person name="Guild B.C."/>
            <person name="deJonge B.L."/>
            <person name="Carmel G."/>
            <person name="Tummino P.J."/>
            <person name="Caruso A."/>
            <person name="Uria-Nickelsen M."/>
            <person name="Mills D.M."/>
            <person name="Ives C."/>
            <person name="Gibson R."/>
            <person name="Merberg D."/>
            <person name="Mills S.D."/>
            <person name="Jiang Q."/>
            <person name="Taylor D.E."/>
            <person name="Vovis G.F."/>
            <person name="Trust T.J."/>
        </authorList>
    </citation>
    <scope>NUCLEOTIDE SEQUENCE [LARGE SCALE GENOMIC DNA]</scope>
    <source>
        <strain>J99 / ATCC 700824</strain>
    </source>
</reference>
<evidence type="ECO:0000250" key="1">
    <source>
        <dbReference type="UniProtKB" id="P00363"/>
    </source>
</evidence>
<evidence type="ECO:0000250" key="2">
    <source>
        <dbReference type="UniProtKB" id="P17412"/>
    </source>
</evidence>
<evidence type="ECO:0000305" key="3"/>
<accession>Q9ZMP0</accession>
<proteinExistence type="inferred from homology"/>
<name>FRDA_HELPJ</name>
<keyword id="KW-0997">Cell inner membrane</keyword>
<keyword id="KW-1003">Cell membrane</keyword>
<keyword id="KW-0249">Electron transport</keyword>
<keyword id="KW-0274">FAD</keyword>
<keyword id="KW-0285">Flavoprotein</keyword>
<keyword id="KW-0472">Membrane</keyword>
<keyword id="KW-0560">Oxidoreductase</keyword>
<keyword id="KW-0813">Transport</keyword>
<gene>
    <name type="primary">frdA</name>
    <name type="ordered locus">jhp_0178</name>
</gene>
<organism>
    <name type="scientific">Helicobacter pylori (strain J99 / ATCC 700824)</name>
    <name type="common">Campylobacter pylori J99</name>
    <dbReference type="NCBI Taxonomy" id="85963"/>
    <lineage>
        <taxon>Bacteria</taxon>
        <taxon>Pseudomonadati</taxon>
        <taxon>Campylobacterota</taxon>
        <taxon>Epsilonproteobacteria</taxon>
        <taxon>Campylobacterales</taxon>
        <taxon>Helicobacteraceae</taxon>
        <taxon>Helicobacter</taxon>
    </lineage>
</organism>
<comment type="function">
    <text evidence="2">The fumarate reductase enzyme complex is required for fumarate respiration.</text>
</comment>
<comment type="catalytic activity">
    <reaction evidence="2">
        <text>a quinone + succinate = fumarate + a quinol</text>
        <dbReference type="Rhea" id="RHEA:40523"/>
        <dbReference type="ChEBI" id="CHEBI:24646"/>
        <dbReference type="ChEBI" id="CHEBI:29806"/>
        <dbReference type="ChEBI" id="CHEBI:30031"/>
        <dbReference type="ChEBI" id="CHEBI:132124"/>
        <dbReference type="EC" id="1.3.5.1"/>
    </reaction>
</comment>
<comment type="cofactor">
    <cofactor evidence="2">
        <name>FAD</name>
        <dbReference type="ChEBI" id="CHEBI:57692"/>
    </cofactor>
    <text evidence="2">Binds 1 FAD covalently per subunit.</text>
</comment>
<comment type="subunit">
    <text evidence="2">Part of an enzyme complex containing three subunits: a flavoprotein (frdA), an iron-sulfur protein (frdB), and diheme cytochrome b (frdC).</text>
</comment>
<comment type="subcellular location">
    <subcellularLocation>
        <location evidence="2">Cell inner membrane</location>
        <topology evidence="2">Peripheral membrane protein</topology>
        <orientation evidence="2">Cytoplasmic side</orientation>
    </subcellularLocation>
</comment>
<comment type="similarity">
    <text evidence="3">Belongs to the FAD-dependent oxidoreductase 2 family. FRD/SDH subfamily.</text>
</comment>
<protein>
    <recommendedName>
        <fullName>Fumarate reductase flavoprotein subunit</fullName>
        <ecNumber evidence="2">1.3.5.1</ecNumber>
    </recommendedName>
    <alternativeName>
        <fullName evidence="3">Quinol-fumarate reductase flavoprotein subunit</fullName>
        <shortName evidence="3">QFR flavoprotein subunit</shortName>
    </alternativeName>
</protein>
<feature type="chain" id="PRO_0000158663" description="Fumarate reductase flavoprotein subunit">
    <location>
        <begin position="1"/>
        <end position="714"/>
    </location>
</feature>
<feature type="active site" evidence="1">
    <location>
        <position position="257"/>
    </location>
</feature>
<feature type="active site" evidence="1">
    <location>
        <position position="273"/>
    </location>
</feature>
<feature type="binding site" evidence="2">
    <location>
        <begin position="13"/>
        <end position="16"/>
    </location>
    <ligand>
        <name>FAD</name>
        <dbReference type="ChEBI" id="CHEBI:57692"/>
    </ligand>
</feature>
<feature type="binding site" evidence="2">
    <location>
        <begin position="42"/>
        <end position="44"/>
    </location>
    <ligand>
        <name>FAD</name>
        <dbReference type="ChEBI" id="CHEBI:57692"/>
    </ligand>
</feature>
<feature type="binding site" evidence="2">
    <location>
        <begin position="49"/>
        <end position="50"/>
    </location>
    <ligand>
        <name>FAD</name>
        <dbReference type="ChEBI" id="CHEBI:57692"/>
    </ligand>
</feature>
<feature type="binding site" evidence="2">
    <location>
        <position position="420"/>
    </location>
    <ligand>
        <name>FAD</name>
        <dbReference type="ChEBI" id="CHEBI:57692"/>
    </ligand>
</feature>
<feature type="binding site" evidence="2">
    <location>
        <begin position="436"/>
        <end position="437"/>
    </location>
    <ligand>
        <name>FAD</name>
        <dbReference type="ChEBI" id="CHEBI:57692"/>
    </ligand>
</feature>
<feature type="modified residue" description="Tele-8alpha-FAD histidine" evidence="2">
    <location>
        <position position="43"/>
    </location>
</feature>
<dbReference type="EC" id="1.3.5.1" evidence="2"/>
<dbReference type="EMBL" id="AE001439">
    <property type="protein sequence ID" value="AAD05762.1"/>
    <property type="molecule type" value="Genomic_DNA"/>
</dbReference>
<dbReference type="PIR" id="G71963">
    <property type="entry name" value="G71963"/>
</dbReference>
<dbReference type="RefSeq" id="WP_000705948.1">
    <property type="nucleotide sequence ID" value="NC_000921.1"/>
</dbReference>
<dbReference type="SMR" id="Q9ZMP0"/>
<dbReference type="IntAct" id="Q9ZMP0">
    <property type="interactions" value="1"/>
</dbReference>
<dbReference type="KEGG" id="hpj:jhp_0178"/>
<dbReference type="eggNOG" id="COG1053">
    <property type="taxonomic scope" value="Bacteria"/>
</dbReference>
<dbReference type="Proteomes" id="UP000000804">
    <property type="component" value="Chromosome"/>
</dbReference>
<dbReference type="GO" id="GO:0005886">
    <property type="term" value="C:plasma membrane"/>
    <property type="evidence" value="ECO:0007669"/>
    <property type="project" value="UniProtKB-SubCell"/>
</dbReference>
<dbReference type="GO" id="GO:0009055">
    <property type="term" value="F:electron transfer activity"/>
    <property type="evidence" value="ECO:0007669"/>
    <property type="project" value="TreeGrafter"/>
</dbReference>
<dbReference type="GO" id="GO:0050660">
    <property type="term" value="F:flavin adenine dinucleotide binding"/>
    <property type="evidence" value="ECO:0007669"/>
    <property type="project" value="TreeGrafter"/>
</dbReference>
<dbReference type="GO" id="GO:0008177">
    <property type="term" value="F:succinate dehydrogenase (quinone) activity"/>
    <property type="evidence" value="ECO:0007669"/>
    <property type="project" value="RHEA"/>
</dbReference>
<dbReference type="GO" id="GO:0009061">
    <property type="term" value="P:anaerobic respiration"/>
    <property type="evidence" value="ECO:0007669"/>
    <property type="project" value="TreeGrafter"/>
</dbReference>
<dbReference type="FunFam" id="3.10.20.820:FF:000002">
    <property type="entry name" value="Fumarate reductase flavoprotein subunit"/>
    <property type="match status" value="1"/>
</dbReference>
<dbReference type="FunFam" id="3.50.50.60:FF:000009">
    <property type="entry name" value="Succinate dehydrogenase flavoprotein subunit"/>
    <property type="match status" value="1"/>
</dbReference>
<dbReference type="FunFam" id="3.90.700.10:FF:000005">
    <property type="entry name" value="Succinate dehydrogenase flavoprotein subunit"/>
    <property type="match status" value="1"/>
</dbReference>
<dbReference type="Gene3D" id="3.10.20.820">
    <property type="match status" value="1"/>
</dbReference>
<dbReference type="Gene3D" id="3.50.50.60">
    <property type="entry name" value="FAD/NAD(P)-binding domain"/>
    <property type="match status" value="2"/>
</dbReference>
<dbReference type="Gene3D" id="1.20.58.100">
    <property type="entry name" value="Fumarate reductase/succinate dehydrogenase flavoprotein-like, C-terminal domain"/>
    <property type="match status" value="1"/>
</dbReference>
<dbReference type="Gene3D" id="3.90.700.10">
    <property type="entry name" value="Succinate dehydrogenase/fumarate reductase flavoprotein, catalytic domain"/>
    <property type="match status" value="1"/>
</dbReference>
<dbReference type="InterPro" id="IPR003953">
    <property type="entry name" value="FAD-dep_OxRdtase_2_FAD-bd"/>
</dbReference>
<dbReference type="InterPro" id="IPR036188">
    <property type="entry name" value="FAD/NAD-bd_sf"/>
</dbReference>
<dbReference type="InterPro" id="IPR003952">
    <property type="entry name" value="FRD_SDH_FAD_BS"/>
</dbReference>
<dbReference type="InterPro" id="IPR037099">
    <property type="entry name" value="Fum_R/Succ_DH_flav-like_C_sf"/>
</dbReference>
<dbReference type="InterPro" id="IPR015939">
    <property type="entry name" value="Fum_Rdtase/Succ_DH_flav-like_C"/>
</dbReference>
<dbReference type="InterPro" id="IPR030664">
    <property type="entry name" value="SdhA/FrdA/AprA"/>
</dbReference>
<dbReference type="InterPro" id="IPR027477">
    <property type="entry name" value="Succ_DH/fumarate_Rdtase_cat_sf"/>
</dbReference>
<dbReference type="NCBIfam" id="NF006383">
    <property type="entry name" value="PRK08626.1"/>
    <property type="match status" value="1"/>
</dbReference>
<dbReference type="PANTHER" id="PTHR11632:SF71">
    <property type="entry name" value="FUMARATE REDUCTASE FLAVOPROTEIN SUBUNIT"/>
    <property type="match status" value="1"/>
</dbReference>
<dbReference type="PANTHER" id="PTHR11632">
    <property type="entry name" value="SUCCINATE DEHYDROGENASE 2 FLAVOPROTEIN SUBUNIT"/>
    <property type="match status" value="1"/>
</dbReference>
<dbReference type="Pfam" id="PF00890">
    <property type="entry name" value="FAD_binding_2"/>
    <property type="match status" value="1"/>
</dbReference>
<dbReference type="Pfam" id="PF02910">
    <property type="entry name" value="Succ_DH_flav_C"/>
    <property type="match status" value="1"/>
</dbReference>
<dbReference type="PIRSF" id="PIRSF000171">
    <property type="entry name" value="SDHA_APRA_LASPO"/>
    <property type="match status" value="1"/>
</dbReference>
<dbReference type="PRINTS" id="PR00368">
    <property type="entry name" value="FADPNR"/>
</dbReference>
<dbReference type="SUPFAM" id="SSF51905">
    <property type="entry name" value="FAD/NAD(P)-binding domain"/>
    <property type="match status" value="1"/>
</dbReference>
<dbReference type="SUPFAM" id="SSF46977">
    <property type="entry name" value="Succinate dehydrogenase/fumarate reductase flavoprotein C-terminal domain"/>
    <property type="match status" value="1"/>
</dbReference>
<dbReference type="SUPFAM" id="SSF56425">
    <property type="entry name" value="Succinate dehydrogenase/fumarate reductase flavoprotein, catalytic domain"/>
    <property type="match status" value="1"/>
</dbReference>
<dbReference type="PROSITE" id="PS00504">
    <property type="entry name" value="FRD_SDH_FAD_BINDING"/>
    <property type="match status" value="1"/>
</dbReference>